<feature type="chain" id="PRO_0000303283" description="tRNA N6-adenosine threonylcarbamoyltransferase">
    <location>
        <begin position="1"/>
        <end position="341"/>
    </location>
</feature>
<feature type="binding site" evidence="1">
    <location>
        <position position="111"/>
    </location>
    <ligand>
        <name>Fe cation</name>
        <dbReference type="ChEBI" id="CHEBI:24875"/>
    </ligand>
</feature>
<feature type="binding site" evidence="1">
    <location>
        <position position="115"/>
    </location>
    <ligand>
        <name>Fe cation</name>
        <dbReference type="ChEBI" id="CHEBI:24875"/>
    </ligand>
</feature>
<feature type="binding site" evidence="1">
    <location>
        <begin position="134"/>
        <end position="138"/>
    </location>
    <ligand>
        <name>substrate</name>
    </ligand>
</feature>
<feature type="binding site" evidence="1">
    <location>
        <position position="167"/>
    </location>
    <ligand>
        <name>substrate</name>
    </ligand>
</feature>
<feature type="binding site" evidence="1">
    <location>
        <position position="180"/>
    </location>
    <ligand>
        <name>substrate</name>
    </ligand>
</feature>
<feature type="binding site" evidence="1">
    <location>
        <position position="272"/>
    </location>
    <ligand>
        <name>substrate</name>
    </ligand>
</feature>
<feature type="binding site" evidence="1">
    <location>
        <position position="300"/>
    </location>
    <ligand>
        <name>Fe cation</name>
        <dbReference type="ChEBI" id="CHEBI:24875"/>
    </ligand>
</feature>
<sequence length="341" mass="37137">MRVLGIETSCDETGVAIYDQHKGLLANEVYSQSELHADYGGVVPELAARDHVRKIVPLISCTLNRARLEPKNIDGIAYTAGPGLMGALLVGATVARTLAYAWKIPAIDIHHMEAHLLAPMLEKKVPTFPFIALLVSGGHTQLVSASNIGEYKILGESIDDAVGEVFDKIAILLGLKYPGGALLSKMAQKGISKRYVFPRPMIDRPGLNFSFSGLKTCTVNTIMSNSHDAQNCADIARAFEDAIIETLAIKCRRALNQTGLKCLVISGGVSANHALRSYLLKMMYTLQGSLFYPRPEFCTDNGAMVAYAGLIRLKAGLFSDLPILVRPRWSLEDLPRIKQSL</sequence>
<accession>Q493X8</accession>
<keyword id="KW-0012">Acyltransferase</keyword>
<keyword id="KW-0963">Cytoplasm</keyword>
<keyword id="KW-0408">Iron</keyword>
<keyword id="KW-0479">Metal-binding</keyword>
<keyword id="KW-1185">Reference proteome</keyword>
<keyword id="KW-0808">Transferase</keyword>
<keyword id="KW-0819">tRNA processing</keyword>
<dbReference type="EC" id="2.3.1.234" evidence="1"/>
<dbReference type="EMBL" id="CP000016">
    <property type="protein sequence ID" value="AAZ40706.1"/>
    <property type="molecule type" value="Genomic_DNA"/>
</dbReference>
<dbReference type="RefSeq" id="WP_011282612.1">
    <property type="nucleotide sequence ID" value="NC_007292.1"/>
</dbReference>
<dbReference type="SMR" id="Q493X8"/>
<dbReference type="STRING" id="291272.BPEN_060"/>
<dbReference type="KEGG" id="bpn:BPEN_060"/>
<dbReference type="eggNOG" id="COG0533">
    <property type="taxonomic scope" value="Bacteria"/>
</dbReference>
<dbReference type="HOGENOM" id="CLU_023208_0_2_6"/>
<dbReference type="OrthoDB" id="9806197at2"/>
<dbReference type="Proteomes" id="UP000007794">
    <property type="component" value="Chromosome"/>
</dbReference>
<dbReference type="GO" id="GO:0005737">
    <property type="term" value="C:cytoplasm"/>
    <property type="evidence" value="ECO:0007669"/>
    <property type="project" value="UniProtKB-SubCell"/>
</dbReference>
<dbReference type="GO" id="GO:0005506">
    <property type="term" value="F:iron ion binding"/>
    <property type="evidence" value="ECO:0007669"/>
    <property type="project" value="UniProtKB-UniRule"/>
</dbReference>
<dbReference type="GO" id="GO:0061711">
    <property type="term" value="F:N(6)-L-threonylcarbamoyladenine synthase activity"/>
    <property type="evidence" value="ECO:0007669"/>
    <property type="project" value="UniProtKB-EC"/>
</dbReference>
<dbReference type="GO" id="GO:0002949">
    <property type="term" value="P:tRNA threonylcarbamoyladenosine modification"/>
    <property type="evidence" value="ECO:0007669"/>
    <property type="project" value="UniProtKB-UniRule"/>
</dbReference>
<dbReference type="CDD" id="cd24133">
    <property type="entry name" value="ASKHA_NBD_TsaD_bac"/>
    <property type="match status" value="1"/>
</dbReference>
<dbReference type="FunFam" id="3.30.420.40:FF:000012">
    <property type="entry name" value="tRNA N6-adenosine threonylcarbamoyltransferase"/>
    <property type="match status" value="1"/>
</dbReference>
<dbReference type="Gene3D" id="3.30.420.40">
    <property type="match status" value="2"/>
</dbReference>
<dbReference type="HAMAP" id="MF_01445">
    <property type="entry name" value="TsaD"/>
    <property type="match status" value="1"/>
</dbReference>
<dbReference type="InterPro" id="IPR043129">
    <property type="entry name" value="ATPase_NBD"/>
</dbReference>
<dbReference type="InterPro" id="IPR000905">
    <property type="entry name" value="Gcp-like_dom"/>
</dbReference>
<dbReference type="InterPro" id="IPR017861">
    <property type="entry name" value="KAE1/TsaD"/>
</dbReference>
<dbReference type="InterPro" id="IPR017860">
    <property type="entry name" value="Peptidase_M22_CS"/>
</dbReference>
<dbReference type="InterPro" id="IPR022450">
    <property type="entry name" value="TsaD"/>
</dbReference>
<dbReference type="NCBIfam" id="TIGR00329">
    <property type="entry name" value="gcp_kae1"/>
    <property type="match status" value="1"/>
</dbReference>
<dbReference type="NCBIfam" id="TIGR03723">
    <property type="entry name" value="T6A_TsaD_YgjD"/>
    <property type="match status" value="1"/>
</dbReference>
<dbReference type="PANTHER" id="PTHR11735">
    <property type="entry name" value="TRNA N6-ADENOSINE THREONYLCARBAMOYLTRANSFERASE"/>
    <property type="match status" value="1"/>
</dbReference>
<dbReference type="PANTHER" id="PTHR11735:SF6">
    <property type="entry name" value="TRNA N6-ADENOSINE THREONYLCARBAMOYLTRANSFERASE, MITOCHONDRIAL"/>
    <property type="match status" value="1"/>
</dbReference>
<dbReference type="Pfam" id="PF00814">
    <property type="entry name" value="TsaD"/>
    <property type="match status" value="1"/>
</dbReference>
<dbReference type="PRINTS" id="PR00789">
    <property type="entry name" value="OSIALOPTASE"/>
</dbReference>
<dbReference type="SUPFAM" id="SSF53067">
    <property type="entry name" value="Actin-like ATPase domain"/>
    <property type="match status" value="1"/>
</dbReference>
<dbReference type="PROSITE" id="PS01016">
    <property type="entry name" value="GLYCOPROTEASE"/>
    <property type="match status" value="1"/>
</dbReference>
<proteinExistence type="inferred from homology"/>
<reference key="1">
    <citation type="journal article" date="2005" name="Genome Res.">
        <title>Genome sequence of Blochmannia pennsylvanicus indicates parallel evolutionary trends among bacterial mutualists of insects.</title>
        <authorList>
            <person name="Degnan P.H."/>
            <person name="Lazarus A.B."/>
            <person name="Wernegreen J.J."/>
        </authorList>
    </citation>
    <scope>NUCLEOTIDE SEQUENCE [LARGE SCALE GENOMIC DNA]</scope>
    <source>
        <strain>BPEN</strain>
    </source>
</reference>
<comment type="function">
    <text evidence="1">Required for the formation of a threonylcarbamoyl group on adenosine at position 37 (t(6)A37) in tRNAs that read codons beginning with adenine. Is involved in the transfer of the threonylcarbamoyl moiety of threonylcarbamoyl-AMP (TC-AMP) to the N6 group of A37, together with TsaE and TsaB. TsaD likely plays a direct catalytic role in this reaction.</text>
</comment>
<comment type="catalytic activity">
    <reaction evidence="1">
        <text>L-threonylcarbamoyladenylate + adenosine(37) in tRNA = N(6)-L-threonylcarbamoyladenosine(37) in tRNA + AMP + H(+)</text>
        <dbReference type="Rhea" id="RHEA:37059"/>
        <dbReference type="Rhea" id="RHEA-COMP:10162"/>
        <dbReference type="Rhea" id="RHEA-COMP:10163"/>
        <dbReference type="ChEBI" id="CHEBI:15378"/>
        <dbReference type="ChEBI" id="CHEBI:73682"/>
        <dbReference type="ChEBI" id="CHEBI:74411"/>
        <dbReference type="ChEBI" id="CHEBI:74418"/>
        <dbReference type="ChEBI" id="CHEBI:456215"/>
        <dbReference type="EC" id="2.3.1.234"/>
    </reaction>
</comment>
<comment type="cofactor">
    <cofactor evidence="1">
        <name>Fe(2+)</name>
        <dbReference type="ChEBI" id="CHEBI:29033"/>
    </cofactor>
    <text evidence="1">Binds 1 Fe(2+) ion per subunit.</text>
</comment>
<comment type="subcellular location">
    <subcellularLocation>
        <location evidence="1">Cytoplasm</location>
    </subcellularLocation>
</comment>
<comment type="similarity">
    <text evidence="1">Belongs to the KAE1 / TsaD family.</text>
</comment>
<gene>
    <name evidence="1" type="primary">tsaD</name>
    <name type="synonym">gcp</name>
    <name type="ordered locus">BPEN_060</name>
</gene>
<organism>
    <name type="scientific">Blochmanniella pennsylvanica (strain BPEN)</name>
    <dbReference type="NCBI Taxonomy" id="291272"/>
    <lineage>
        <taxon>Bacteria</taxon>
        <taxon>Pseudomonadati</taxon>
        <taxon>Pseudomonadota</taxon>
        <taxon>Gammaproteobacteria</taxon>
        <taxon>Enterobacterales</taxon>
        <taxon>Enterobacteriaceae</taxon>
        <taxon>ant endosymbionts</taxon>
        <taxon>Candidatus Blochmanniella</taxon>
    </lineage>
</organism>
<protein>
    <recommendedName>
        <fullName evidence="1">tRNA N6-adenosine threonylcarbamoyltransferase</fullName>
        <ecNumber evidence="1">2.3.1.234</ecNumber>
    </recommendedName>
    <alternativeName>
        <fullName evidence="1">N6-L-threonylcarbamoyladenine synthase</fullName>
        <shortName evidence="1">t(6)A synthase</shortName>
    </alternativeName>
    <alternativeName>
        <fullName evidence="1">t(6)A37 threonylcarbamoyladenosine biosynthesis protein TsaD</fullName>
    </alternativeName>
    <alternativeName>
        <fullName evidence="1">tRNA threonylcarbamoyladenosine biosynthesis protein TsaD</fullName>
    </alternativeName>
</protein>
<name>TSAD_BLOPB</name>
<evidence type="ECO:0000255" key="1">
    <source>
        <dbReference type="HAMAP-Rule" id="MF_01445"/>
    </source>
</evidence>